<dbReference type="EC" id="1.9.6.1" evidence="1"/>
<dbReference type="EMBL" id="CP000510">
    <property type="protein sequence ID" value="ABM03915.1"/>
    <property type="molecule type" value="Genomic_DNA"/>
</dbReference>
<dbReference type="RefSeq" id="WP_011770475.1">
    <property type="nucleotide sequence ID" value="NC_008709.1"/>
</dbReference>
<dbReference type="SMR" id="A1SWQ0"/>
<dbReference type="STRING" id="357804.Ping_2174"/>
<dbReference type="KEGG" id="pin:Ping_2174"/>
<dbReference type="eggNOG" id="COG0243">
    <property type="taxonomic scope" value="Bacteria"/>
</dbReference>
<dbReference type="HOGENOM" id="CLU_000422_13_4_6"/>
<dbReference type="OrthoDB" id="9810782at2"/>
<dbReference type="Proteomes" id="UP000000639">
    <property type="component" value="Chromosome"/>
</dbReference>
<dbReference type="GO" id="GO:0016020">
    <property type="term" value="C:membrane"/>
    <property type="evidence" value="ECO:0007669"/>
    <property type="project" value="TreeGrafter"/>
</dbReference>
<dbReference type="GO" id="GO:0009325">
    <property type="term" value="C:nitrate reductase complex"/>
    <property type="evidence" value="ECO:0007669"/>
    <property type="project" value="TreeGrafter"/>
</dbReference>
<dbReference type="GO" id="GO:0042597">
    <property type="term" value="C:periplasmic space"/>
    <property type="evidence" value="ECO:0007669"/>
    <property type="project" value="UniProtKB-SubCell"/>
</dbReference>
<dbReference type="GO" id="GO:0051539">
    <property type="term" value="F:4 iron, 4 sulfur cluster binding"/>
    <property type="evidence" value="ECO:0007669"/>
    <property type="project" value="UniProtKB-KW"/>
</dbReference>
<dbReference type="GO" id="GO:0009055">
    <property type="term" value="F:electron transfer activity"/>
    <property type="evidence" value="ECO:0007669"/>
    <property type="project" value="UniProtKB-UniRule"/>
</dbReference>
<dbReference type="GO" id="GO:0005506">
    <property type="term" value="F:iron ion binding"/>
    <property type="evidence" value="ECO:0007669"/>
    <property type="project" value="UniProtKB-UniRule"/>
</dbReference>
<dbReference type="GO" id="GO:0030151">
    <property type="term" value="F:molybdenum ion binding"/>
    <property type="evidence" value="ECO:0007669"/>
    <property type="project" value="InterPro"/>
</dbReference>
<dbReference type="GO" id="GO:0043546">
    <property type="term" value="F:molybdopterin cofactor binding"/>
    <property type="evidence" value="ECO:0007669"/>
    <property type="project" value="InterPro"/>
</dbReference>
<dbReference type="GO" id="GO:0050140">
    <property type="term" value="F:nitrate reductase (cytochrome) activity"/>
    <property type="evidence" value="ECO:0007669"/>
    <property type="project" value="UniProtKB-EC"/>
</dbReference>
<dbReference type="GO" id="GO:0045333">
    <property type="term" value="P:cellular respiration"/>
    <property type="evidence" value="ECO:0007669"/>
    <property type="project" value="UniProtKB-ARBA"/>
</dbReference>
<dbReference type="GO" id="GO:0006777">
    <property type="term" value="P:Mo-molybdopterin cofactor biosynthetic process"/>
    <property type="evidence" value="ECO:0007669"/>
    <property type="project" value="UniProtKB-UniRule"/>
</dbReference>
<dbReference type="GO" id="GO:0042128">
    <property type="term" value="P:nitrate assimilation"/>
    <property type="evidence" value="ECO:0007669"/>
    <property type="project" value="UniProtKB-UniRule"/>
</dbReference>
<dbReference type="CDD" id="cd02791">
    <property type="entry name" value="MopB_CT_Nitrate-R-NapA-like"/>
    <property type="match status" value="1"/>
</dbReference>
<dbReference type="CDD" id="cd02754">
    <property type="entry name" value="MopB_Nitrate-R-NapA-like"/>
    <property type="match status" value="1"/>
</dbReference>
<dbReference type="FunFam" id="2.40.40.20:FF:000005">
    <property type="entry name" value="Periplasmic nitrate reductase"/>
    <property type="match status" value="1"/>
</dbReference>
<dbReference type="Gene3D" id="2.40.40.20">
    <property type="match status" value="1"/>
</dbReference>
<dbReference type="Gene3D" id="3.30.200.210">
    <property type="match status" value="1"/>
</dbReference>
<dbReference type="Gene3D" id="3.40.50.740">
    <property type="match status" value="1"/>
</dbReference>
<dbReference type="Gene3D" id="3.40.228.10">
    <property type="entry name" value="Dimethylsulfoxide Reductase, domain 2"/>
    <property type="match status" value="1"/>
</dbReference>
<dbReference type="HAMAP" id="MF_01630">
    <property type="entry name" value="Nitrate_reduct_NapA"/>
    <property type="match status" value="1"/>
</dbReference>
<dbReference type="InterPro" id="IPR009010">
    <property type="entry name" value="Asp_de-COase-like_dom_sf"/>
</dbReference>
<dbReference type="InterPro" id="IPR041957">
    <property type="entry name" value="CT_Nitrate-R-NapA-like"/>
</dbReference>
<dbReference type="InterPro" id="IPR006657">
    <property type="entry name" value="MoPterin_dinucl-bd_dom"/>
</dbReference>
<dbReference type="InterPro" id="IPR006656">
    <property type="entry name" value="Mopterin_OxRdtase"/>
</dbReference>
<dbReference type="InterPro" id="IPR006963">
    <property type="entry name" value="Mopterin_OxRdtase_4Fe-4S_dom"/>
</dbReference>
<dbReference type="InterPro" id="IPR027467">
    <property type="entry name" value="MopterinOxRdtase_cofactor_BS"/>
</dbReference>
<dbReference type="InterPro" id="IPR010051">
    <property type="entry name" value="Periplasm_NO3_reductase_lsu"/>
</dbReference>
<dbReference type="InterPro" id="IPR050123">
    <property type="entry name" value="Prok_molybdopt-oxidoreductase"/>
</dbReference>
<dbReference type="InterPro" id="IPR006311">
    <property type="entry name" value="TAT_signal"/>
</dbReference>
<dbReference type="InterPro" id="IPR019546">
    <property type="entry name" value="TAT_signal_bac_arc"/>
</dbReference>
<dbReference type="NCBIfam" id="TIGR01706">
    <property type="entry name" value="NAPA"/>
    <property type="match status" value="1"/>
</dbReference>
<dbReference type="NCBIfam" id="NF010055">
    <property type="entry name" value="PRK13532.1"/>
    <property type="match status" value="1"/>
</dbReference>
<dbReference type="NCBIfam" id="TIGR01409">
    <property type="entry name" value="TAT_signal_seq"/>
    <property type="match status" value="1"/>
</dbReference>
<dbReference type="PANTHER" id="PTHR43105:SF11">
    <property type="entry name" value="PERIPLASMIC NITRATE REDUCTASE"/>
    <property type="match status" value="1"/>
</dbReference>
<dbReference type="PANTHER" id="PTHR43105">
    <property type="entry name" value="RESPIRATORY NITRATE REDUCTASE"/>
    <property type="match status" value="1"/>
</dbReference>
<dbReference type="Pfam" id="PF04879">
    <property type="entry name" value="Molybdop_Fe4S4"/>
    <property type="match status" value="1"/>
</dbReference>
<dbReference type="Pfam" id="PF00384">
    <property type="entry name" value="Molybdopterin"/>
    <property type="match status" value="1"/>
</dbReference>
<dbReference type="Pfam" id="PF01568">
    <property type="entry name" value="Molydop_binding"/>
    <property type="match status" value="1"/>
</dbReference>
<dbReference type="SMART" id="SM00926">
    <property type="entry name" value="Molybdop_Fe4S4"/>
    <property type="match status" value="1"/>
</dbReference>
<dbReference type="SUPFAM" id="SSF50692">
    <property type="entry name" value="ADC-like"/>
    <property type="match status" value="1"/>
</dbReference>
<dbReference type="SUPFAM" id="SSF53706">
    <property type="entry name" value="Formate dehydrogenase/DMSO reductase, domains 1-3"/>
    <property type="match status" value="1"/>
</dbReference>
<dbReference type="PROSITE" id="PS51669">
    <property type="entry name" value="4FE4S_MOW_BIS_MGD"/>
    <property type="match status" value="1"/>
</dbReference>
<dbReference type="PROSITE" id="PS00551">
    <property type="entry name" value="MOLYBDOPTERIN_PROK_1"/>
    <property type="match status" value="1"/>
</dbReference>
<dbReference type="PROSITE" id="PS51318">
    <property type="entry name" value="TAT"/>
    <property type="match status" value="1"/>
</dbReference>
<proteinExistence type="inferred from homology"/>
<reference key="1">
    <citation type="journal article" date="2008" name="BMC Genomics">
        <title>Genomics of an extreme psychrophile, Psychromonas ingrahamii.</title>
        <authorList>
            <person name="Riley M."/>
            <person name="Staley J.T."/>
            <person name="Danchin A."/>
            <person name="Wang T.Z."/>
            <person name="Brettin T.S."/>
            <person name="Hauser L.J."/>
            <person name="Land M.L."/>
            <person name="Thompson L.S."/>
        </authorList>
    </citation>
    <scope>NUCLEOTIDE SEQUENCE [LARGE SCALE GENOMIC DNA]</scope>
    <source>
        <strain>DSM 17664 / CCUG 51855 / 37</strain>
    </source>
</reference>
<name>NAPA_PSYIN</name>
<comment type="function">
    <text evidence="1">Catalytic subunit of the periplasmic nitrate reductase complex NapAB. Receives electrons from NapB and catalyzes the reduction of nitrate to nitrite.</text>
</comment>
<comment type="catalytic activity">
    <reaction evidence="1">
        <text>2 Fe(II)-[cytochrome] + nitrate + 2 H(+) = 2 Fe(III)-[cytochrome] + nitrite + H2O</text>
        <dbReference type="Rhea" id="RHEA:12909"/>
        <dbReference type="Rhea" id="RHEA-COMP:11777"/>
        <dbReference type="Rhea" id="RHEA-COMP:11778"/>
        <dbReference type="ChEBI" id="CHEBI:15377"/>
        <dbReference type="ChEBI" id="CHEBI:15378"/>
        <dbReference type="ChEBI" id="CHEBI:16301"/>
        <dbReference type="ChEBI" id="CHEBI:17632"/>
        <dbReference type="ChEBI" id="CHEBI:29033"/>
        <dbReference type="ChEBI" id="CHEBI:29034"/>
        <dbReference type="EC" id="1.9.6.1"/>
    </reaction>
</comment>
<comment type="cofactor">
    <cofactor evidence="1">
        <name>[4Fe-4S] cluster</name>
        <dbReference type="ChEBI" id="CHEBI:49883"/>
    </cofactor>
    <text evidence="1">Binds 1 [4Fe-4S] cluster.</text>
</comment>
<comment type="cofactor">
    <cofactor evidence="1">
        <name>Mo-bis(molybdopterin guanine dinucleotide)</name>
        <dbReference type="ChEBI" id="CHEBI:60539"/>
    </cofactor>
    <text evidence="1">Binds 1 molybdenum-bis(molybdopterin guanine dinucleotide) (Mo-bis-MGD) cofactor per subunit.</text>
</comment>
<comment type="subunit">
    <text evidence="1">Component of the periplasmic nitrate reductase NapAB complex composed of NapA and NapB.</text>
</comment>
<comment type="subcellular location">
    <subcellularLocation>
        <location evidence="1">Periplasm</location>
    </subcellularLocation>
</comment>
<comment type="PTM">
    <text evidence="1">Predicted to be exported by the Tat system. The position of the signal peptide cleavage has not been experimentally proven.</text>
</comment>
<comment type="similarity">
    <text evidence="1">Belongs to the prokaryotic molybdopterin-containing oxidoreductase family. NasA/NapA/NarB subfamily.</text>
</comment>
<protein>
    <recommendedName>
        <fullName evidence="1">Periplasmic nitrate reductase</fullName>
        <ecNumber evidence="1">1.9.6.1</ecNumber>
    </recommendedName>
</protein>
<feature type="signal peptide" description="Tat-type signal" evidence="1">
    <location>
        <begin position="1"/>
        <end position="29"/>
    </location>
</feature>
<feature type="chain" id="PRO_5000206772" description="Periplasmic nitrate reductase" evidence="1">
    <location>
        <begin position="30"/>
        <end position="831"/>
    </location>
</feature>
<feature type="domain" description="4Fe-4S Mo/W bis-MGD-type" evidence="1">
    <location>
        <begin position="41"/>
        <end position="97"/>
    </location>
</feature>
<feature type="binding site" evidence="1">
    <location>
        <position position="48"/>
    </location>
    <ligand>
        <name>[4Fe-4S] cluster</name>
        <dbReference type="ChEBI" id="CHEBI:49883"/>
    </ligand>
</feature>
<feature type="binding site" evidence="1">
    <location>
        <position position="51"/>
    </location>
    <ligand>
        <name>[4Fe-4S] cluster</name>
        <dbReference type="ChEBI" id="CHEBI:49883"/>
    </ligand>
</feature>
<feature type="binding site" evidence="1">
    <location>
        <position position="55"/>
    </location>
    <ligand>
        <name>[4Fe-4S] cluster</name>
        <dbReference type="ChEBI" id="CHEBI:49883"/>
    </ligand>
</feature>
<feature type="binding site" evidence="1">
    <location>
        <position position="83"/>
    </location>
    <ligand>
        <name>[4Fe-4S] cluster</name>
        <dbReference type="ChEBI" id="CHEBI:49883"/>
    </ligand>
</feature>
<feature type="binding site" evidence="1">
    <location>
        <position position="85"/>
    </location>
    <ligand>
        <name>Mo-bis(molybdopterin guanine dinucleotide)</name>
        <dbReference type="ChEBI" id="CHEBI:60539"/>
    </ligand>
</feature>
<feature type="binding site" evidence="1">
    <location>
        <position position="152"/>
    </location>
    <ligand>
        <name>Mo-bis(molybdopterin guanine dinucleotide)</name>
        <dbReference type="ChEBI" id="CHEBI:60539"/>
    </ligand>
</feature>
<feature type="binding site" evidence="1">
    <location>
        <position position="177"/>
    </location>
    <ligand>
        <name>Mo-bis(molybdopterin guanine dinucleotide)</name>
        <dbReference type="ChEBI" id="CHEBI:60539"/>
    </ligand>
</feature>
<feature type="binding site" evidence="1">
    <location>
        <position position="181"/>
    </location>
    <ligand>
        <name>Mo-bis(molybdopterin guanine dinucleotide)</name>
        <dbReference type="ChEBI" id="CHEBI:60539"/>
    </ligand>
</feature>
<feature type="binding site" evidence="1">
    <location>
        <begin position="214"/>
        <end position="221"/>
    </location>
    <ligand>
        <name>Mo-bis(molybdopterin guanine dinucleotide)</name>
        <dbReference type="ChEBI" id="CHEBI:60539"/>
    </ligand>
</feature>
<feature type="binding site" evidence="1">
    <location>
        <begin position="245"/>
        <end position="249"/>
    </location>
    <ligand>
        <name>Mo-bis(molybdopterin guanine dinucleotide)</name>
        <dbReference type="ChEBI" id="CHEBI:60539"/>
    </ligand>
</feature>
<feature type="binding site" evidence="1">
    <location>
        <begin position="264"/>
        <end position="266"/>
    </location>
    <ligand>
        <name>Mo-bis(molybdopterin guanine dinucleotide)</name>
        <dbReference type="ChEBI" id="CHEBI:60539"/>
    </ligand>
</feature>
<feature type="binding site" evidence="1">
    <location>
        <position position="374"/>
    </location>
    <ligand>
        <name>Mo-bis(molybdopterin guanine dinucleotide)</name>
        <dbReference type="ChEBI" id="CHEBI:60539"/>
    </ligand>
</feature>
<feature type="binding site" evidence="1">
    <location>
        <position position="378"/>
    </location>
    <ligand>
        <name>Mo-bis(molybdopterin guanine dinucleotide)</name>
        <dbReference type="ChEBI" id="CHEBI:60539"/>
    </ligand>
</feature>
<feature type="binding site" evidence="1">
    <location>
        <position position="484"/>
    </location>
    <ligand>
        <name>Mo-bis(molybdopterin guanine dinucleotide)</name>
        <dbReference type="ChEBI" id="CHEBI:60539"/>
    </ligand>
</feature>
<feature type="binding site" evidence="1">
    <location>
        <begin position="510"/>
        <end position="511"/>
    </location>
    <ligand>
        <name>Mo-bis(molybdopterin guanine dinucleotide)</name>
        <dbReference type="ChEBI" id="CHEBI:60539"/>
    </ligand>
</feature>
<feature type="binding site" evidence="1">
    <location>
        <position position="533"/>
    </location>
    <ligand>
        <name>Mo-bis(molybdopterin guanine dinucleotide)</name>
        <dbReference type="ChEBI" id="CHEBI:60539"/>
    </ligand>
</feature>
<feature type="binding site" evidence="1">
    <location>
        <position position="560"/>
    </location>
    <ligand>
        <name>Mo-bis(molybdopterin guanine dinucleotide)</name>
        <dbReference type="ChEBI" id="CHEBI:60539"/>
    </ligand>
</feature>
<feature type="binding site" evidence="1">
    <location>
        <begin position="720"/>
        <end position="729"/>
    </location>
    <ligand>
        <name>Mo-bis(molybdopterin guanine dinucleotide)</name>
        <dbReference type="ChEBI" id="CHEBI:60539"/>
    </ligand>
</feature>
<feature type="binding site" evidence="1">
    <location>
        <position position="796"/>
    </location>
    <ligand>
        <name>substrate</name>
    </ligand>
</feature>
<feature type="binding site" evidence="1">
    <location>
        <position position="804"/>
    </location>
    <ligand>
        <name>Mo-bis(molybdopterin guanine dinucleotide)</name>
        <dbReference type="ChEBI" id="CHEBI:60539"/>
    </ligand>
</feature>
<feature type="binding site" evidence="1">
    <location>
        <position position="821"/>
    </location>
    <ligand>
        <name>Mo-bis(molybdopterin guanine dinucleotide)</name>
        <dbReference type="ChEBI" id="CHEBI:60539"/>
    </ligand>
</feature>
<organism>
    <name type="scientific">Psychromonas ingrahamii (strain DSM 17664 / CCUG 51855 / 37)</name>
    <dbReference type="NCBI Taxonomy" id="357804"/>
    <lineage>
        <taxon>Bacteria</taxon>
        <taxon>Pseudomonadati</taxon>
        <taxon>Pseudomonadota</taxon>
        <taxon>Gammaproteobacteria</taxon>
        <taxon>Alteromonadales</taxon>
        <taxon>Psychromonadaceae</taxon>
        <taxon>Psychromonas</taxon>
    </lineage>
</organism>
<gene>
    <name evidence="1" type="primary">napA</name>
    <name type="ordered locus">Ping_2174</name>
</gene>
<keyword id="KW-0004">4Fe-4S</keyword>
<keyword id="KW-0249">Electron transport</keyword>
<keyword id="KW-0408">Iron</keyword>
<keyword id="KW-0411">Iron-sulfur</keyword>
<keyword id="KW-0479">Metal-binding</keyword>
<keyword id="KW-0500">Molybdenum</keyword>
<keyword id="KW-0534">Nitrate assimilation</keyword>
<keyword id="KW-0560">Oxidoreductase</keyword>
<keyword id="KW-0574">Periplasm</keyword>
<keyword id="KW-1185">Reference proteome</keyword>
<keyword id="KW-0732">Signal</keyword>
<keyword id="KW-0813">Transport</keyword>
<sequence>MKFTRREFMKAQAAASAAAVAGIALPATASNLIASQDLTKIKWEKAPCRFCGTGCSVLVGTQHGRVVATQGDPESPVNKGLNCVKGYFLSKIMYGKDRLTTPLLRMTEGVYDKNGQFEPVSWDAAFDIMADKFKDALKKKGPTAVGMFGSGQWTLWEGYAASKLMKAGFRTNNLDPNARHCMASAVGGFMRTFGIDEPMGCYDDLENADVFVLWGSNMAEMHPILWSRLADRRLSNPDVSVHVLSTYTHRSFELADNGMIFTPQSDLAILNFIANYIIQNDAVDKDFIEKHTNFRKGVTDIGYGLRPTDPLQKAAENPDSGASSPITFEEFAEYVSEFDVDYAVKMSGVPAEKLIELAKVYADPAKKVVSYWTMGFNQHTRGVWANNLMYNVHLLTGKISKPGSGPFSLTGQPSACGTAREVGTFSHRLPADLVVANPKHRAIAEKLWKLPEGTIEPKPGYHAVLQNRMLKDSKLNAYWVMCNNNVQAGANINEEIIPGYRNPENFIVVSDPYPTVTAQMGDLILPTAMWVEKEGAYGNAERRTQFWHQQVKAPEGAKSDLWQLVEFSKRFKIEEVWTEDLIAKMPEVRGETLFDVLYKNGQVDAFGLDEVADERLNDEARDFGFYIQKGLFEEYASFGRGHGHDLAPFDQYHEARGLRWPVVNGKETLWRFREGYDPYVEKGSEVQFYGHPDKKAVIFALPYEPPAESPDQEYDLWLSTGRVLEHWHSGSMTRRVPELYKAFPDAVVFMHPDDATARGVRRGDEIVLASRRGELTSRVETRGRNRPPRGLVFMPWFDAKQLVNKITLDATDPLSKQTDYKKCAVKITKKV</sequence>
<accession>A1SWQ0</accession>
<evidence type="ECO:0000255" key="1">
    <source>
        <dbReference type="HAMAP-Rule" id="MF_01630"/>
    </source>
</evidence>